<dbReference type="EC" id="2.5.1.75" evidence="1"/>
<dbReference type="EMBL" id="CP000468">
    <property type="protein sequence ID" value="ABJ03717.1"/>
    <property type="molecule type" value="Genomic_DNA"/>
</dbReference>
<dbReference type="RefSeq" id="WP_001280359.1">
    <property type="nucleotide sequence ID" value="NZ_CADILS010000035.1"/>
</dbReference>
<dbReference type="SMR" id="A1AJ77"/>
<dbReference type="KEGG" id="ecv:APECO1_2220"/>
<dbReference type="HOGENOM" id="CLU_032616_0_0_6"/>
<dbReference type="Proteomes" id="UP000008216">
    <property type="component" value="Chromosome"/>
</dbReference>
<dbReference type="GO" id="GO:0005524">
    <property type="term" value="F:ATP binding"/>
    <property type="evidence" value="ECO:0007669"/>
    <property type="project" value="UniProtKB-UniRule"/>
</dbReference>
<dbReference type="GO" id="GO:0052381">
    <property type="term" value="F:tRNA dimethylallyltransferase activity"/>
    <property type="evidence" value="ECO:0007669"/>
    <property type="project" value="UniProtKB-UniRule"/>
</dbReference>
<dbReference type="GO" id="GO:0006400">
    <property type="term" value="P:tRNA modification"/>
    <property type="evidence" value="ECO:0007669"/>
    <property type="project" value="TreeGrafter"/>
</dbReference>
<dbReference type="FunFam" id="1.10.20.140:FF:000001">
    <property type="entry name" value="tRNA dimethylallyltransferase"/>
    <property type="match status" value="1"/>
</dbReference>
<dbReference type="FunFam" id="1.10.287.890:FF:000001">
    <property type="entry name" value="tRNA dimethylallyltransferase"/>
    <property type="match status" value="1"/>
</dbReference>
<dbReference type="Gene3D" id="1.10.20.140">
    <property type="match status" value="1"/>
</dbReference>
<dbReference type="Gene3D" id="1.10.287.890">
    <property type="entry name" value="Crystal structure of tRNA isopentenylpyrophosphate transferase (bh2366) domain"/>
    <property type="match status" value="1"/>
</dbReference>
<dbReference type="Gene3D" id="3.40.50.300">
    <property type="entry name" value="P-loop containing nucleotide triphosphate hydrolases"/>
    <property type="match status" value="1"/>
</dbReference>
<dbReference type="HAMAP" id="MF_00185">
    <property type="entry name" value="IPP_trans"/>
    <property type="match status" value="1"/>
</dbReference>
<dbReference type="InterPro" id="IPR039657">
    <property type="entry name" value="Dimethylallyltransferase"/>
</dbReference>
<dbReference type="InterPro" id="IPR018022">
    <property type="entry name" value="IPT"/>
</dbReference>
<dbReference type="InterPro" id="IPR027417">
    <property type="entry name" value="P-loop_NTPase"/>
</dbReference>
<dbReference type="NCBIfam" id="TIGR00174">
    <property type="entry name" value="miaA"/>
    <property type="match status" value="1"/>
</dbReference>
<dbReference type="PANTHER" id="PTHR11088">
    <property type="entry name" value="TRNA DIMETHYLALLYLTRANSFERASE"/>
    <property type="match status" value="1"/>
</dbReference>
<dbReference type="PANTHER" id="PTHR11088:SF60">
    <property type="entry name" value="TRNA DIMETHYLALLYLTRANSFERASE"/>
    <property type="match status" value="1"/>
</dbReference>
<dbReference type="Pfam" id="PF01715">
    <property type="entry name" value="IPPT"/>
    <property type="match status" value="1"/>
</dbReference>
<dbReference type="SUPFAM" id="SSF52540">
    <property type="entry name" value="P-loop containing nucleoside triphosphate hydrolases"/>
    <property type="match status" value="1"/>
</dbReference>
<sequence length="316" mass="35064">MSDISKASLPKAIFLMGPTASGKTALAIELRKILPVELISVDSALIYKGMDIGTAKPNAEELLAAPHRLLNIRDPSQAYSAADFRRDALAEMADITAAGRIPLLVGGTMLYFKALLEGLSPLPSADPEVRARIEQQAAEQGWESLHRQLQEVDPVAAARIHPNDPQRLSRALEVFFISGKTLTELTQTSGDALPYQVHQFAIAPASRELLHQRIEQRFHQMLASGFEAEVRALFARGDLHTDLPSIRCVGYRQMWSYLEGEISYDEMVYRGVCATRQLAKRQITWLRGWEGVHWLDSEKPEQARDEVLQVVGAIAG</sequence>
<accession>A1AJ77</accession>
<feature type="chain" id="PRO_1000020594" description="tRNA dimethylallyltransferase">
    <location>
        <begin position="1"/>
        <end position="316"/>
    </location>
</feature>
<feature type="region of interest" description="Interaction with substrate tRNA" evidence="1">
    <location>
        <begin position="42"/>
        <end position="45"/>
    </location>
</feature>
<feature type="region of interest" description="Interaction with substrate tRNA" evidence="1">
    <location>
        <begin position="166"/>
        <end position="170"/>
    </location>
</feature>
<feature type="region of interest" description="Interaction with substrate tRNA" evidence="1">
    <location>
        <begin position="247"/>
        <end position="252"/>
    </location>
</feature>
<feature type="region of interest" description="Interaction with substrate tRNA" evidence="1">
    <location>
        <begin position="280"/>
        <end position="287"/>
    </location>
</feature>
<feature type="binding site" evidence="1">
    <location>
        <begin position="17"/>
        <end position="24"/>
    </location>
    <ligand>
        <name>ATP</name>
        <dbReference type="ChEBI" id="CHEBI:30616"/>
    </ligand>
</feature>
<feature type="binding site" evidence="1">
    <location>
        <begin position="19"/>
        <end position="24"/>
    </location>
    <ligand>
        <name>substrate</name>
    </ligand>
</feature>
<feature type="site" description="Interaction with substrate tRNA" evidence="1">
    <location>
        <position position="108"/>
    </location>
</feature>
<feature type="site" description="Interaction with substrate tRNA" evidence="1">
    <location>
        <position position="130"/>
    </location>
</feature>
<reference key="1">
    <citation type="journal article" date="2007" name="J. Bacteriol.">
        <title>The genome sequence of avian pathogenic Escherichia coli strain O1:K1:H7 shares strong similarities with human extraintestinal pathogenic E. coli genomes.</title>
        <authorList>
            <person name="Johnson T.J."/>
            <person name="Kariyawasam S."/>
            <person name="Wannemuehler Y."/>
            <person name="Mangiamele P."/>
            <person name="Johnson S.J."/>
            <person name="Doetkott C."/>
            <person name="Skyberg J.A."/>
            <person name="Lynne A.M."/>
            <person name="Johnson J.R."/>
            <person name="Nolan L.K."/>
        </authorList>
    </citation>
    <scope>NUCLEOTIDE SEQUENCE [LARGE SCALE GENOMIC DNA]</scope>
</reference>
<keyword id="KW-0067">ATP-binding</keyword>
<keyword id="KW-0460">Magnesium</keyword>
<keyword id="KW-0547">Nucleotide-binding</keyword>
<keyword id="KW-1185">Reference proteome</keyword>
<keyword id="KW-0808">Transferase</keyword>
<keyword id="KW-0819">tRNA processing</keyword>
<gene>
    <name evidence="1" type="primary">miaA</name>
    <name type="ordered locus">Ecok1_42230</name>
    <name type="ORF">APECO1_2220</name>
</gene>
<comment type="function">
    <text evidence="1">Catalyzes the transfer of a dimethylallyl group onto the adenine at position 37 in tRNAs that read codons beginning with uridine, leading to the formation of N6-(dimethylallyl)adenosine (i(6)A).</text>
</comment>
<comment type="catalytic activity">
    <reaction evidence="1">
        <text>adenosine(37) in tRNA + dimethylallyl diphosphate = N(6)-dimethylallyladenosine(37) in tRNA + diphosphate</text>
        <dbReference type="Rhea" id="RHEA:26482"/>
        <dbReference type="Rhea" id="RHEA-COMP:10162"/>
        <dbReference type="Rhea" id="RHEA-COMP:10375"/>
        <dbReference type="ChEBI" id="CHEBI:33019"/>
        <dbReference type="ChEBI" id="CHEBI:57623"/>
        <dbReference type="ChEBI" id="CHEBI:74411"/>
        <dbReference type="ChEBI" id="CHEBI:74415"/>
        <dbReference type="EC" id="2.5.1.75"/>
    </reaction>
</comment>
<comment type="cofactor">
    <cofactor evidence="1">
        <name>Mg(2+)</name>
        <dbReference type="ChEBI" id="CHEBI:18420"/>
    </cofactor>
</comment>
<comment type="subunit">
    <text evidence="1">Monomer.</text>
</comment>
<comment type="similarity">
    <text evidence="1">Belongs to the IPP transferase family.</text>
</comment>
<organism>
    <name type="scientific">Escherichia coli O1:K1 / APEC</name>
    <dbReference type="NCBI Taxonomy" id="405955"/>
    <lineage>
        <taxon>Bacteria</taxon>
        <taxon>Pseudomonadati</taxon>
        <taxon>Pseudomonadota</taxon>
        <taxon>Gammaproteobacteria</taxon>
        <taxon>Enterobacterales</taxon>
        <taxon>Enterobacteriaceae</taxon>
        <taxon>Escherichia</taxon>
    </lineage>
</organism>
<name>MIAA_ECOK1</name>
<protein>
    <recommendedName>
        <fullName evidence="1">tRNA dimethylallyltransferase</fullName>
        <ecNumber evidence="1">2.5.1.75</ecNumber>
    </recommendedName>
    <alternativeName>
        <fullName evidence="1">Dimethylallyl diphosphate:tRNA dimethylallyltransferase</fullName>
        <shortName evidence="1">DMAPP:tRNA dimethylallyltransferase</shortName>
        <shortName evidence="1">DMATase</shortName>
    </alternativeName>
    <alternativeName>
        <fullName evidence="1">Isopentenyl-diphosphate:tRNA isopentenyltransferase</fullName>
        <shortName evidence="1">IPP transferase</shortName>
        <shortName evidence="1">IPPT</shortName>
        <shortName evidence="1">IPTase</shortName>
    </alternativeName>
</protein>
<evidence type="ECO:0000255" key="1">
    <source>
        <dbReference type="HAMAP-Rule" id="MF_00185"/>
    </source>
</evidence>
<proteinExistence type="inferred from homology"/>